<feature type="chain" id="PRO_0000284510" description="Outer dynein arm-docking complex subunit 4">
    <location>
        <begin position="1"/>
        <end position="531"/>
    </location>
</feature>
<feature type="repeat" description="TPR 1" evidence="2">
    <location>
        <begin position="15"/>
        <end position="48"/>
    </location>
</feature>
<feature type="repeat" description="TPR 2" evidence="2">
    <location>
        <begin position="50"/>
        <end position="82"/>
    </location>
</feature>
<feature type="repeat" description="TPR 3" evidence="2">
    <location>
        <begin position="83"/>
        <end position="116"/>
    </location>
</feature>
<feature type="repeat" description="TPR 4" evidence="2">
    <location>
        <begin position="275"/>
        <end position="307"/>
    </location>
</feature>
<feature type="repeat" description="TPR 5" evidence="2">
    <location>
        <begin position="320"/>
        <end position="353"/>
    </location>
</feature>
<feature type="repeat" description="TPR 6" evidence="2">
    <location>
        <begin position="360"/>
        <end position="393"/>
    </location>
</feature>
<feature type="repeat" description="TPR 7" evidence="2">
    <location>
        <begin position="397"/>
        <end position="430"/>
    </location>
</feature>
<feature type="repeat" description="TPR 8" evidence="2">
    <location>
        <begin position="437"/>
        <end position="470"/>
    </location>
</feature>
<feature type="region of interest" description="Disordered" evidence="3">
    <location>
        <begin position="161"/>
        <end position="185"/>
    </location>
</feature>
<feature type="region of interest" description="Disordered" evidence="3">
    <location>
        <begin position="487"/>
        <end position="531"/>
    </location>
</feature>
<feature type="compositionally biased region" description="Basic and acidic residues" evidence="3">
    <location>
        <begin position="169"/>
        <end position="185"/>
    </location>
</feature>
<feature type="compositionally biased region" description="Acidic residues" evidence="3">
    <location>
        <begin position="492"/>
        <end position="503"/>
    </location>
</feature>
<feature type="compositionally biased region" description="Basic and acidic residues" evidence="3">
    <location>
        <begin position="521"/>
        <end position="531"/>
    </location>
</feature>
<feature type="splice variant" id="VSP_024550" description="In isoform 2." evidence="6">
    <original>D</original>
    <variation>DEE</variation>
    <location>
        <position position="515"/>
    </location>
</feature>
<feature type="sequence conflict" description="In Ref. 1; AAH68935." evidence="7" ref="1">
    <original>A</original>
    <variation>T</variation>
    <location>
        <position position="74"/>
    </location>
</feature>
<feature type="sequence conflict" description="In Ref. 1; AAH68935." evidence="7" ref="1">
    <original>D</original>
    <variation>N</variation>
    <location>
        <position position="147"/>
    </location>
</feature>
<evidence type="ECO:0000250" key="1">
    <source>
        <dbReference type="UniProtKB" id="Q96NG3"/>
    </source>
</evidence>
<evidence type="ECO:0000255" key="2"/>
<evidence type="ECO:0000256" key="3">
    <source>
        <dbReference type="SAM" id="MobiDB-lite"/>
    </source>
</evidence>
<evidence type="ECO:0000269" key="4">
    <source>
    </source>
</evidence>
<evidence type="ECO:0000269" key="5">
    <source>
    </source>
</evidence>
<evidence type="ECO:0000303" key="6">
    <source ref="1"/>
</evidence>
<evidence type="ECO:0000305" key="7"/>
<protein>
    <recommendedName>
        <fullName>Outer dynein arm-docking complex subunit 4</fullName>
    </recommendedName>
    <alternativeName>
        <fullName>Tetratricopeptide repeat protein 25</fullName>
        <shortName>TPR repeat protein 25</shortName>
    </alternativeName>
</protein>
<name>ODAD4_XENLA</name>
<proteinExistence type="evidence at transcript level"/>
<keyword id="KW-0025">Alternative splicing</keyword>
<keyword id="KW-0966">Cell projection</keyword>
<keyword id="KW-0963">Cytoplasm</keyword>
<keyword id="KW-0206">Cytoskeleton</keyword>
<keyword id="KW-1185">Reference proteome</keyword>
<keyword id="KW-0677">Repeat</keyword>
<keyword id="KW-0802">TPR repeat</keyword>
<gene>
    <name type="primary">odad4</name>
    <name type="synonym">ttc25</name>
</gene>
<comment type="function">
    <text evidence="1">Component of the outer dynein arm-docking complex (ODA-DC) that mediates outer dynein arms (ODA) binding onto the doublet microtubule. Plays an essential role for the assembly of ODA-DC and in the docking of ODA in ciliary axoneme.</text>
</comment>
<comment type="function">
    <text evidence="5">Required for the docking of the outer dynein arm to cilia, hence plays an essential role in cilia motility.</text>
</comment>
<comment type="subunit">
    <text evidence="1">Component of the outer dynein arm-docking complex.</text>
</comment>
<comment type="subcellular location">
    <subcellularLocation>
        <location evidence="4">Cytoplasm</location>
        <location evidence="4">Cytoskeleton</location>
        <location evidence="4">Cilium axoneme</location>
    </subcellularLocation>
    <text evidence="4">In addition to ciliary axonemes, also detected in foci, presumably basal bodies, at the apical cell surface.</text>
</comment>
<comment type="alternative products">
    <event type="alternative splicing"/>
    <isoform>
        <id>Q32NU8-1</id>
        <name>1</name>
        <sequence type="displayed"/>
    </isoform>
    <isoform>
        <id>Q32NU8-2</id>
        <name>2</name>
        <sequence type="described" ref="VSP_024550"/>
    </isoform>
</comment>
<comment type="tissue specificity">
    <text evidence="4">In the mucociliary epithelium, specifically expressed in ciliated cells.</text>
</comment>
<comment type="developmental stage">
    <text evidence="4">Expressed in the ventral midline of the developing neural plate during neural tube closure.</text>
</comment>
<comment type="disruption phenotype">
    <text evidence="4 5">Morpholino knockdown of the protein causes disruption of the neural tube closure (PubMed:17961536). Morphants show defects in ciliogenesis at early stages of embryonic development (PubMed:17961536, PubMed:27486780). More mature multiciliated cells display normal cilium length, but exhibit severe defects in ciliary beating, retaining only a twitching motility, but no organized beating. Outer dynein arms are absent in morphant axonemes (PubMed:27486780).</text>
</comment>
<comment type="sequence caution" evidence="7">
    <conflict type="erroneous initiation">
        <sequence resource="EMBL-CDS" id="AAH68935"/>
    </conflict>
    <text>Extended N-terminus.</text>
</comment>
<accession>Q32NU8</accession>
<accession>Q6NTM4</accession>
<dbReference type="EMBL" id="BC108468">
    <property type="protein sequence ID" value="AAI08469.1"/>
    <property type="molecule type" value="mRNA"/>
</dbReference>
<dbReference type="EMBL" id="BC068935">
    <property type="protein sequence ID" value="AAH68935.1"/>
    <property type="status" value="ALT_INIT"/>
    <property type="molecule type" value="mRNA"/>
</dbReference>
<dbReference type="RefSeq" id="NP_001084612.2">
    <property type="nucleotide sequence ID" value="NM_001091143.2"/>
</dbReference>
<dbReference type="SMR" id="Q32NU8"/>
<dbReference type="DNASU" id="414568"/>
<dbReference type="GeneID" id="414568"/>
<dbReference type="KEGG" id="xla:414568"/>
<dbReference type="AGR" id="Xenbase:XB-GENE-5960311"/>
<dbReference type="CTD" id="414568"/>
<dbReference type="Xenbase" id="XB-GENE-5960311">
    <property type="gene designation" value="odad4.L"/>
</dbReference>
<dbReference type="OrthoDB" id="10268002at2759"/>
<dbReference type="Proteomes" id="UP000186698">
    <property type="component" value="Chromosome 9_10L"/>
</dbReference>
<dbReference type="Bgee" id="414568">
    <property type="expression patterns" value="Expressed in testis and 16 other cell types or tissues"/>
</dbReference>
<dbReference type="GO" id="GO:0042995">
    <property type="term" value="C:cell projection"/>
    <property type="evidence" value="ECO:0007669"/>
    <property type="project" value="UniProtKB-KW"/>
</dbReference>
<dbReference type="GO" id="GO:0005737">
    <property type="term" value="C:cytoplasm"/>
    <property type="evidence" value="ECO:0000318"/>
    <property type="project" value="GO_Central"/>
</dbReference>
<dbReference type="GO" id="GO:0005856">
    <property type="term" value="C:cytoskeleton"/>
    <property type="evidence" value="ECO:0007669"/>
    <property type="project" value="UniProtKB-KW"/>
</dbReference>
<dbReference type="GO" id="GO:0003341">
    <property type="term" value="P:cilium movement"/>
    <property type="evidence" value="ECO:0000250"/>
    <property type="project" value="UniProtKB"/>
</dbReference>
<dbReference type="GO" id="GO:0036158">
    <property type="term" value="P:outer dynein arm assembly"/>
    <property type="evidence" value="ECO:0000250"/>
    <property type="project" value="UniProtKB"/>
</dbReference>
<dbReference type="FunFam" id="1.25.40.10:FF:000189">
    <property type="entry name" value="Tetratricopeptide repeat domain 25"/>
    <property type="match status" value="1"/>
</dbReference>
<dbReference type="FunFam" id="1.25.40.10:FF:000274">
    <property type="entry name" value="Tetratricopeptide repeat domain 25"/>
    <property type="match status" value="1"/>
</dbReference>
<dbReference type="Gene3D" id="1.25.40.10">
    <property type="entry name" value="Tetratricopeptide repeat domain"/>
    <property type="match status" value="2"/>
</dbReference>
<dbReference type="InterPro" id="IPR040111">
    <property type="entry name" value="ODAD4"/>
</dbReference>
<dbReference type="InterPro" id="IPR011990">
    <property type="entry name" value="TPR-like_helical_dom_sf"/>
</dbReference>
<dbReference type="InterPro" id="IPR019734">
    <property type="entry name" value="TPR_rpt"/>
</dbReference>
<dbReference type="PANTHER" id="PTHR23040">
    <property type="match status" value="1"/>
</dbReference>
<dbReference type="PANTHER" id="PTHR23040:SF1">
    <property type="entry name" value="OUTER DYNEIN ARM-DOCKING COMPLEX SUBUNIT 4"/>
    <property type="match status" value="1"/>
</dbReference>
<dbReference type="Pfam" id="PF13181">
    <property type="entry name" value="TPR_8"/>
    <property type="match status" value="2"/>
</dbReference>
<dbReference type="SMART" id="SM00028">
    <property type="entry name" value="TPR"/>
    <property type="match status" value="6"/>
</dbReference>
<dbReference type="SUPFAM" id="SSF48452">
    <property type="entry name" value="TPR-like"/>
    <property type="match status" value="1"/>
</dbReference>
<dbReference type="PROSITE" id="PS50005">
    <property type="entry name" value="TPR"/>
    <property type="match status" value="6"/>
</dbReference>
<dbReference type="PROSITE" id="PS50293">
    <property type="entry name" value="TPR_REGION"/>
    <property type="match status" value="2"/>
</dbReference>
<sequence>MAEETDEQQAPQSTFSTYMAEGEQLYHKAEYKKASDSFTAALQLQPEEKNCLVARSKCFLKLGEPECALKDAEASLQIENDFFKGLYQKAEALYAMGDFEFALVHYHRGYKLRPEFQGFRLGIQKAQEAIENSVGTPASVKLENKTDLQFISRQEESKKAKQKAQVKVQKKDSKQQKKVDPERSQKTVRQLLGELYSDKEYLESLLRDEALVKGNTRGGVKLHDLIINGILYLDTRSEFWRQQKPIYARQRDRKIMQQKWKRDKNKSADPSQYIVKSLEEIDQLLSSGKAEESYKKAQLVLKKVERWTSVDIHNREELTGSLHSCIGNAQMDMGQIEAALQSHKKDLAIAEKYKLLEAKSRALDNIGRVYARIGKFNEAIKVWEEKIPLANSSLEKTWLYHEIGRCYLELEQTAEAKEYGEKSQQEADAAEDIEWQLNACVLLAQAEVKLKHYQSAISSFENALERARLLHNKDAEQAILVALEDAKQGMEEQQESEQNNDENDNLRADGNTARDEEEEDVHVQRTEEDEG</sequence>
<organism>
    <name type="scientific">Xenopus laevis</name>
    <name type="common">African clawed frog</name>
    <dbReference type="NCBI Taxonomy" id="8355"/>
    <lineage>
        <taxon>Eukaryota</taxon>
        <taxon>Metazoa</taxon>
        <taxon>Chordata</taxon>
        <taxon>Craniata</taxon>
        <taxon>Vertebrata</taxon>
        <taxon>Euteleostomi</taxon>
        <taxon>Amphibia</taxon>
        <taxon>Batrachia</taxon>
        <taxon>Anura</taxon>
        <taxon>Pipoidea</taxon>
        <taxon>Pipidae</taxon>
        <taxon>Xenopodinae</taxon>
        <taxon>Xenopus</taxon>
        <taxon>Xenopus</taxon>
    </lineage>
</organism>
<reference key="1">
    <citation type="submission" date="2005-11" db="EMBL/GenBank/DDBJ databases">
        <authorList>
            <consortium name="NIH - Xenopus Gene Collection (XGC) project"/>
        </authorList>
    </citation>
    <scope>NUCLEOTIDE SEQUENCE [LARGE SCALE MRNA] (ISOFORMS 1 AND 2)</scope>
    <source>
        <tissue>Embryo</tissue>
        <tissue>Testis</tissue>
    </source>
</reference>
<reference key="2">
    <citation type="journal article" date="2007" name="Dev. Biol.">
        <title>Identification of novel ciliogenesis factors using a new in vivo model for mucociliary epithelial development.</title>
        <authorList>
            <person name="Hayes J.M."/>
            <person name="Kim S.K."/>
            <person name="Abitua P.B."/>
            <person name="Park T.J."/>
            <person name="Herrington E.R."/>
            <person name="Kitayama A."/>
            <person name="Grow M.W."/>
            <person name="Ueno N."/>
            <person name="Wallingford J.B."/>
        </authorList>
    </citation>
    <scope>SUBCELLULAR LOCATION</scope>
    <scope>TISSUE SPECIFICITY</scope>
    <scope>DEVELOPMENTAL STAGE</scope>
    <scope>DISRUPTION PHENOTYPE</scope>
</reference>
<reference key="3">
    <citation type="journal article" date="2016" name="Am. J. Hum. Genet.">
        <title>TTC25 deficiency results in defects of the outer dynein arm docking machinery and primary ciliary dyskinesia with left-right body asymmetry randomization.</title>
        <authorList>
            <person name="Wallmeier J."/>
            <person name="Shiratori H."/>
            <person name="Dougherty G.W."/>
            <person name="Edelbusch C."/>
            <person name="Hjeij R."/>
            <person name="Loges N.T."/>
            <person name="Menchen T."/>
            <person name="Olbrich H."/>
            <person name="Pennekamp P."/>
            <person name="Raidt J."/>
            <person name="Werner C."/>
            <person name="Minegishi K."/>
            <person name="Shinohara K."/>
            <person name="Asai Y."/>
            <person name="Takaoka K."/>
            <person name="Lee C."/>
            <person name="Griese M."/>
            <person name="Memari Y."/>
            <person name="Durbin R."/>
            <person name="Kolb-Kokocinski A."/>
            <person name="Sauer S."/>
            <person name="Wallingford J.B."/>
            <person name="Hamada H."/>
            <person name="Omran H."/>
        </authorList>
    </citation>
    <scope>FUNCTION</scope>
    <scope>DISRUPTION PHENOTYPE</scope>
</reference>